<reference key="1">
    <citation type="journal article" date="1998" name="Science">
        <title>Genome sequence of the nematode C. elegans: a platform for investigating biology.</title>
        <authorList>
            <consortium name="The C. elegans sequencing consortium"/>
        </authorList>
    </citation>
    <scope>NUCLEOTIDE SEQUENCE [LARGE SCALE GENOMIC DNA]</scope>
    <source>
        <strain>Bristol N2</strain>
    </source>
</reference>
<sequence>MTKKAKRNIVHKRFDSIVKGSQDTKKYRGLELTNGLRVLLVSDSKTRVSAVALDVKVGHLMDPWELPGLAHFCEHMLFLGTAKYPSEREYFKYLAANNGDSNAYTDTDHTNYSFEVRSEKLYGALDRFAQFFLDPQFTESATEREVCAVNCEYLDKVNEDFWRCLQVERSLSKPGHDYSKFAIGNKKTLLEDPRTKGIEPRDVLLDFYKNWYSSDIMTCCIVGKESLDVLESYLGSFKFDAIKNTRKERKIWKDSPFGPDQLAKRIEIVPIQNTGQVSIKFPFPDLNGEFLSQPGDYIAHLIGHEGPGSLLSELKRLGWVISLEADNHTIASGFGVFSVTMDLSTEGLEHVDDVIQLVFNFIGFLKSSGPQKWIHDELAELNAVDFRFDDVKHTMEKASILAECLHPKIRKNFETALKTSHHAFNLPEKNEYIPSKFDQKPREPVKSGYPRLISEDEWIQVWFKQDNEYNSPKQGIMFALTTPLVAKKSKNVVAFKSLDTIIEETYNARLAGLECQFESSSSGVQIRVFGYDEKQSLFAKHLVNRMANFQVNRLCFDISFESLKRTLTNHAFSQPHDLSAHFIDLLVVDNIWSKEQLLAVCDSVTLEDVHGFAIKMLQAFHMELFVHGNSTEKDTLQLSKELSDILKSVAPNSRPLKRDEHNPHRELQLINGHEHVYRHFQKTHDVGCVEVAFQIGVQSTYNNSVNKLLNELIKNPAYTILRTNEALGYNVSTESRLNDGNVYLHVIVQGPESADHVLERIEVFLESAREEIVAMPQEDFDYQVWAMFKENPPTLSQCFSMFWSEIHSRQYNFGRNKEVRGISKRITKEEVINFFDRKIRKGGAERRKLALGLWKK</sequence>
<name>YQA4_CAEEL</name>
<evidence type="ECO:0000255" key="1">
    <source>
        <dbReference type="PROSITE-ProRule" id="PRU10096"/>
    </source>
</evidence>
<evidence type="ECO:0000305" key="2"/>
<protein>
    <recommendedName>
        <fullName>Putative zinc protease C28F5.4</fullName>
        <ecNumber>3.4.24.-</ecNumber>
    </recommendedName>
</protein>
<proteinExistence type="inferred from homology"/>
<organism>
    <name type="scientific">Caenorhabditis elegans</name>
    <dbReference type="NCBI Taxonomy" id="6239"/>
    <lineage>
        <taxon>Eukaryota</taxon>
        <taxon>Metazoa</taxon>
        <taxon>Ecdysozoa</taxon>
        <taxon>Nematoda</taxon>
        <taxon>Chromadorea</taxon>
        <taxon>Rhabditida</taxon>
        <taxon>Rhabditina</taxon>
        <taxon>Rhabditomorpha</taxon>
        <taxon>Rhabditoidea</taxon>
        <taxon>Rhabditidae</taxon>
        <taxon>Peloderinae</taxon>
        <taxon>Caenorhabditis</taxon>
    </lineage>
</organism>
<dbReference type="EC" id="3.4.24.-"/>
<dbReference type="EMBL" id="FO080699">
    <property type="protein sequence ID" value="CCD65926.1"/>
    <property type="molecule type" value="Genomic_DNA"/>
</dbReference>
<dbReference type="PIR" id="T15688">
    <property type="entry name" value="T15688"/>
</dbReference>
<dbReference type="RefSeq" id="NP_495575.2">
    <property type="nucleotide sequence ID" value="NM_063174.4"/>
</dbReference>
<dbReference type="SMR" id="Q10040"/>
<dbReference type="BioGRID" id="47824">
    <property type="interactions" value="4"/>
</dbReference>
<dbReference type="FunCoup" id="Q10040">
    <property type="interactions" value="2642"/>
</dbReference>
<dbReference type="STRING" id="6239.C28F5.4.1"/>
<dbReference type="MEROPS" id="M16.A10"/>
<dbReference type="PaxDb" id="6239-C28F5.4"/>
<dbReference type="PeptideAtlas" id="Q10040"/>
<dbReference type="UCSC" id="C28F5.4">
    <property type="organism name" value="c. elegans"/>
</dbReference>
<dbReference type="WormBase" id="C28F5.4">
    <property type="protein sequence ID" value="CE40024"/>
    <property type="gene ID" value="WBGene00016185"/>
</dbReference>
<dbReference type="eggNOG" id="KOG0959">
    <property type="taxonomic scope" value="Eukaryota"/>
</dbReference>
<dbReference type="HOGENOM" id="CLU_004639_1_1_1"/>
<dbReference type="InParanoid" id="Q10040"/>
<dbReference type="OMA" id="ATERECK"/>
<dbReference type="PhylomeDB" id="Q10040"/>
<dbReference type="PRO" id="PR:Q10040"/>
<dbReference type="Proteomes" id="UP000001940">
    <property type="component" value="Chromosome II"/>
</dbReference>
<dbReference type="Bgee" id="WBGene00016185">
    <property type="expression patterns" value="Expressed in material anatomical entity and 2 other cell types or tissues"/>
</dbReference>
<dbReference type="GO" id="GO:0005829">
    <property type="term" value="C:cytosol"/>
    <property type="evidence" value="ECO:0000318"/>
    <property type="project" value="GO_Central"/>
</dbReference>
<dbReference type="GO" id="GO:0005739">
    <property type="term" value="C:mitochondrion"/>
    <property type="evidence" value="ECO:0000318"/>
    <property type="project" value="GO_Central"/>
</dbReference>
<dbReference type="GO" id="GO:0046872">
    <property type="term" value="F:metal ion binding"/>
    <property type="evidence" value="ECO:0007669"/>
    <property type="project" value="UniProtKB-KW"/>
</dbReference>
<dbReference type="GO" id="GO:0004222">
    <property type="term" value="F:metalloendopeptidase activity"/>
    <property type="evidence" value="ECO:0000318"/>
    <property type="project" value="GO_Central"/>
</dbReference>
<dbReference type="GO" id="GO:0043171">
    <property type="term" value="P:peptide catabolic process"/>
    <property type="evidence" value="ECO:0000318"/>
    <property type="project" value="GO_Central"/>
</dbReference>
<dbReference type="GO" id="GO:0051603">
    <property type="term" value="P:proteolysis involved in protein catabolic process"/>
    <property type="evidence" value="ECO:0000318"/>
    <property type="project" value="GO_Central"/>
</dbReference>
<dbReference type="FunFam" id="3.30.830.10:FF:000005">
    <property type="entry name" value="nardilysin isoform X1"/>
    <property type="match status" value="1"/>
</dbReference>
<dbReference type="FunFam" id="3.30.830.10:FF:000004">
    <property type="entry name" value="Putative insulin-degrading enzyme"/>
    <property type="match status" value="1"/>
</dbReference>
<dbReference type="Gene3D" id="3.30.830.10">
    <property type="entry name" value="Metalloenzyme, LuxS/M16 peptidase-like"/>
    <property type="match status" value="4"/>
</dbReference>
<dbReference type="InterPro" id="IPR011249">
    <property type="entry name" value="Metalloenz_LuxS/M16"/>
</dbReference>
<dbReference type="InterPro" id="IPR011765">
    <property type="entry name" value="Pept_M16_N"/>
</dbReference>
<dbReference type="InterPro" id="IPR001431">
    <property type="entry name" value="Pept_M16_Zn_BS"/>
</dbReference>
<dbReference type="InterPro" id="IPR050626">
    <property type="entry name" value="Peptidase_M16"/>
</dbReference>
<dbReference type="InterPro" id="IPR007863">
    <property type="entry name" value="Peptidase_M16_C"/>
</dbReference>
<dbReference type="InterPro" id="IPR032632">
    <property type="entry name" value="Peptidase_M16_M"/>
</dbReference>
<dbReference type="PANTHER" id="PTHR43690:SF18">
    <property type="entry name" value="INSULIN-DEGRADING ENZYME-RELATED"/>
    <property type="match status" value="1"/>
</dbReference>
<dbReference type="PANTHER" id="PTHR43690">
    <property type="entry name" value="NARDILYSIN"/>
    <property type="match status" value="1"/>
</dbReference>
<dbReference type="Pfam" id="PF00675">
    <property type="entry name" value="Peptidase_M16"/>
    <property type="match status" value="1"/>
</dbReference>
<dbReference type="Pfam" id="PF05193">
    <property type="entry name" value="Peptidase_M16_C"/>
    <property type="match status" value="2"/>
</dbReference>
<dbReference type="Pfam" id="PF16187">
    <property type="entry name" value="Peptidase_M16_M"/>
    <property type="match status" value="1"/>
</dbReference>
<dbReference type="SUPFAM" id="SSF63411">
    <property type="entry name" value="LuxS/MPP-like metallohydrolase"/>
    <property type="match status" value="4"/>
</dbReference>
<dbReference type="PROSITE" id="PS00143">
    <property type="entry name" value="INSULINASE"/>
    <property type="match status" value="1"/>
</dbReference>
<accession>Q10040</accession>
<feature type="chain" id="PRO_0000074430" description="Putative zinc protease C28F5.4">
    <location>
        <begin position="1"/>
        <end position="856"/>
    </location>
</feature>
<feature type="active site" description="Proton acceptor" evidence="1">
    <location>
        <position position="74"/>
    </location>
</feature>
<feature type="binding site" evidence="1">
    <location>
        <position position="71"/>
    </location>
    <ligand>
        <name>Zn(2+)</name>
        <dbReference type="ChEBI" id="CHEBI:29105"/>
    </ligand>
</feature>
<feature type="binding site" evidence="1">
    <location>
        <position position="75"/>
    </location>
    <ligand>
        <name>Zn(2+)</name>
        <dbReference type="ChEBI" id="CHEBI:29105"/>
    </ligand>
</feature>
<feature type="binding site" evidence="1">
    <location>
        <position position="152"/>
    </location>
    <ligand>
        <name>Zn(2+)</name>
        <dbReference type="ChEBI" id="CHEBI:29105"/>
    </ligand>
</feature>
<keyword id="KW-0378">Hydrolase</keyword>
<keyword id="KW-0479">Metal-binding</keyword>
<keyword id="KW-0482">Metalloprotease</keyword>
<keyword id="KW-0645">Protease</keyword>
<keyword id="KW-1185">Reference proteome</keyword>
<keyword id="KW-0862">Zinc</keyword>
<comment type="similarity">
    <text evidence="2">Belongs to the peptidase M16 family.</text>
</comment>
<gene>
    <name type="ORF">C28F5.4</name>
</gene>